<protein>
    <recommendedName>
        <fullName evidence="1">Phenylalanine--tRNA ligase alpha subunit</fullName>
        <ecNumber evidence="1">6.1.1.20</ecNumber>
    </recommendedName>
    <alternativeName>
        <fullName evidence="1">Phenylalanyl-tRNA synthetase alpha subunit</fullName>
        <shortName evidence="1">PheRS</shortName>
    </alternativeName>
</protein>
<evidence type="ECO:0000255" key="1">
    <source>
        <dbReference type="HAMAP-Rule" id="MF_00282"/>
    </source>
</evidence>
<comment type="catalytic activity">
    <reaction evidence="1">
        <text>tRNA(Phe) + L-phenylalanine + ATP = L-phenylalanyl-tRNA(Phe) + AMP + diphosphate + H(+)</text>
        <dbReference type="Rhea" id="RHEA:19413"/>
        <dbReference type="Rhea" id="RHEA-COMP:9668"/>
        <dbReference type="Rhea" id="RHEA-COMP:9699"/>
        <dbReference type="ChEBI" id="CHEBI:15378"/>
        <dbReference type="ChEBI" id="CHEBI:30616"/>
        <dbReference type="ChEBI" id="CHEBI:33019"/>
        <dbReference type="ChEBI" id="CHEBI:58095"/>
        <dbReference type="ChEBI" id="CHEBI:78442"/>
        <dbReference type="ChEBI" id="CHEBI:78531"/>
        <dbReference type="ChEBI" id="CHEBI:456215"/>
        <dbReference type="EC" id="6.1.1.20"/>
    </reaction>
</comment>
<comment type="cofactor">
    <cofactor evidence="1">
        <name>Mg(2+)</name>
        <dbReference type="ChEBI" id="CHEBI:18420"/>
    </cofactor>
    <text evidence="1">Binds 2 magnesium ions per tetramer.</text>
</comment>
<comment type="subunit">
    <text evidence="1">Tetramer of two alpha and two beta subunits.</text>
</comment>
<comment type="subcellular location">
    <subcellularLocation>
        <location evidence="1">Cytoplasm</location>
    </subcellularLocation>
</comment>
<comment type="similarity">
    <text evidence="1">Belongs to the class-II aminoacyl-tRNA synthetase family. Phe-tRNA synthetase alpha subunit type 2 subfamily.</text>
</comment>
<keyword id="KW-0030">Aminoacyl-tRNA synthetase</keyword>
<keyword id="KW-0067">ATP-binding</keyword>
<keyword id="KW-0963">Cytoplasm</keyword>
<keyword id="KW-0436">Ligase</keyword>
<keyword id="KW-0460">Magnesium</keyword>
<keyword id="KW-0479">Metal-binding</keyword>
<keyword id="KW-0547">Nucleotide-binding</keyword>
<keyword id="KW-0648">Protein biosynthesis</keyword>
<keyword id="KW-1185">Reference proteome</keyword>
<name>SYFA_PYRAE</name>
<feature type="chain" id="PRO_0000126815" description="Phenylalanine--tRNA ligase alpha subunit">
    <location>
        <begin position="1"/>
        <end position="489"/>
    </location>
</feature>
<feature type="binding site" evidence="1">
    <location>
        <position position="316"/>
    </location>
    <ligand>
        <name>L-phenylalanine</name>
        <dbReference type="ChEBI" id="CHEBI:58095"/>
    </ligand>
</feature>
<feature type="binding site" evidence="1">
    <location>
        <begin position="355"/>
        <end position="357"/>
    </location>
    <ligand>
        <name>L-phenylalanine</name>
        <dbReference type="ChEBI" id="CHEBI:58095"/>
    </ligand>
</feature>
<feature type="binding site" evidence="1">
    <location>
        <position position="395"/>
    </location>
    <ligand>
        <name>L-phenylalanine</name>
        <dbReference type="ChEBI" id="CHEBI:58095"/>
    </ligand>
</feature>
<feature type="binding site" evidence="1">
    <location>
        <position position="420"/>
    </location>
    <ligand>
        <name>L-phenylalanine</name>
        <dbReference type="ChEBI" id="CHEBI:58095"/>
    </ligand>
</feature>
<sequence>MLVLPLPLYEIIRHAPEWKPLEEVARELGSSVDSLMRYVEEGRAKGVLRVERKVIEFYELTEEGRQRAAEGLPEYKLLKSAVCREGRCTAHLSQHPEAQIALANLAKLGVKPRGNVVELDEETYKKIVAMLEEKQKALAAPHSAPPEVLKEFIKRKLVRKIEKTQVYVKAAVPLELVKPAEVKTVITSEDIATGRWRNYTLKPFDLNIEPPEYPAPVPHFFNEFLDYVREVMIGLGFEEVRGPVLEVEFWNFDALFQAQDHPAREVHDTFYVQWSGPLETPPEHLMESVGRVHEEKWRYKWDRKKALNPVLRTQTTATTIRALAERGDGEYKVFTIGRVFRPEKLDPKHSMEFHQLDGIVVGPGLTFKHLLGQLEEIAKALGMTKVKFRPAYFPFTSPSVEVYAQHPKLGWVEFGGAGIFRPEVTEPLGVKKSRVLAWGWGLDRIAMILLGIDDIRELFTKDLEKLKEYYARWARYKASVGAVGTLFTL</sequence>
<proteinExistence type="inferred from homology"/>
<reference key="1">
    <citation type="journal article" date="2002" name="Proc. Natl. Acad. Sci. U.S.A.">
        <title>Genome sequence of the hyperthermophilic crenarchaeon Pyrobaculum aerophilum.</title>
        <authorList>
            <person name="Fitz-Gibbon S.T."/>
            <person name="Ladner H."/>
            <person name="Kim U.-J."/>
            <person name="Stetter K.O."/>
            <person name="Simon M.I."/>
            <person name="Miller J.H."/>
        </authorList>
    </citation>
    <scope>NUCLEOTIDE SEQUENCE [LARGE SCALE GENOMIC DNA]</scope>
    <source>
        <strain>ATCC 51768 / DSM 7523 / JCM 9630 / CIP 104966 / NBRC 100827 / IM2</strain>
    </source>
</reference>
<dbReference type="EC" id="6.1.1.20" evidence="1"/>
<dbReference type="EMBL" id="AE009441">
    <property type="protein sequence ID" value="AAL63488.1"/>
    <property type="molecule type" value="Genomic_DNA"/>
</dbReference>
<dbReference type="RefSeq" id="WP_011007961.1">
    <property type="nucleotide sequence ID" value="NC_003364.1"/>
</dbReference>
<dbReference type="SMR" id="Q8ZX61"/>
<dbReference type="FunCoup" id="Q8ZX61">
    <property type="interactions" value="271"/>
</dbReference>
<dbReference type="STRING" id="178306.PAE1441"/>
<dbReference type="EnsemblBacteria" id="AAL63488">
    <property type="protein sequence ID" value="AAL63488"/>
    <property type="gene ID" value="PAE1441"/>
</dbReference>
<dbReference type="GeneID" id="1465729"/>
<dbReference type="KEGG" id="pai:PAE1441"/>
<dbReference type="PATRIC" id="fig|178306.9.peg.1069"/>
<dbReference type="eggNOG" id="arCOG00410">
    <property type="taxonomic scope" value="Archaea"/>
</dbReference>
<dbReference type="HOGENOM" id="CLU_025086_2_2_2"/>
<dbReference type="InParanoid" id="Q8ZX61"/>
<dbReference type="Proteomes" id="UP000002439">
    <property type="component" value="Chromosome"/>
</dbReference>
<dbReference type="GO" id="GO:0005737">
    <property type="term" value="C:cytoplasm"/>
    <property type="evidence" value="ECO:0000318"/>
    <property type="project" value="GO_Central"/>
</dbReference>
<dbReference type="GO" id="GO:0005524">
    <property type="term" value="F:ATP binding"/>
    <property type="evidence" value="ECO:0007669"/>
    <property type="project" value="UniProtKB-UniRule"/>
</dbReference>
<dbReference type="GO" id="GO:0000287">
    <property type="term" value="F:magnesium ion binding"/>
    <property type="evidence" value="ECO:0007669"/>
    <property type="project" value="UniProtKB-UniRule"/>
</dbReference>
<dbReference type="GO" id="GO:0004826">
    <property type="term" value="F:phenylalanine-tRNA ligase activity"/>
    <property type="evidence" value="ECO:0000318"/>
    <property type="project" value="GO_Central"/>
</dbReference>
<dbReference type="GO" id="GO:0000049">
    <property type="term" value="F:tRNA binding"/>
    <property type="evidence" value="ECO:0007669"/>
    <property type="project" value="InterPro"/>
</dbReference>
<dbReference type="GO" id="GO:0006432">
    <property type="term" value="P:phenylalanyl-tRNA aminoacylation"/>
    <property type="evidence" value="ECO:0000318"/>
    <property type="project" value="GO_Central"/>
</dbReference>
<dbReference type="CDD" id="cd00496">
    <property type="entry name" value="PheRS_alpha_core"/>
    <property type="match status" value="1"/>
</dbReference>
<dbReference type="FunFam" id="3.30.930.10:FF:000095">
    <property type="entry name" value="Phenylalanine--tRNA ligase alpha subunit"/>
    <property type="match status" value="1"/>
</dbReference>
<dbReference type="Gene3D" id="1.10.10.2320">
    <property type="match status" value="1"/>
</dbReference>
<dbReference type="Gene3D" id="1.10.10.2330">
    <property type="match status" value="1"/>
</dbReference>
<dbReference type="Gene3D" id="3.30.1370.240">
    <property type="match status" value="1"/>
</dbReference>
<dbReference type="Gene3D" id="3.30.930.10">
    <property type="entry name" value="Bira Bifunctional Protein, Domain 2"/>
    <property type="match status" value="1"/>
</dbReference>
<dbReference type="HAMAP" id="MF_00282">
    <property type="entry name" value="Phe_tRNA_synth_alpha2"/>
    <property type="match status" value="1"/>
</dbReference>
<dbReference type="InterPro" id="IPR006195">
    <property type="entry name" value="aa-tRNA-synth_II"/>
</dbReference>
<dbReference type="InterPro" id="IPR045864">
    <property type="entry name" value="aa-tRNA-synth_II/BPL/LPL"/>
</dbReference>
<dbReference type="InterPro" id="IPR004529">
    <property type="entry name" value="Phe-tRNA-synth_IIc_asu"/>
</dbReference>
<dbReference type="InterPro" id="IPR022917">
    <property type="entry name" value="Phe_tRNA_ligase_alpha_bac/arc"/>
</dbReference>
<dbReference type="InterPro" id="IPR002319">
    <property type="entry name" value="Phenylalanyl-tRNA_Synthase"/>
</dbReference>
<dbReference type="NCBIfam" id="TIGR00468">
    <property type="entry name" value="pheS"/>
    <property type="match status" value="1"/>
</dbReference>
<dbReference type="NCBIfam" id="NF003210">
    <property type="entry name" value="PRK04172.1"/>
    <property type="match status" value="1"/>
</dbReference>
<dbReference type="PANTHER" id="PTHR11538:SF40">
    <property type="entry name" value="PHENYLALANINE--TRNA LIGASE ALPHA SUBUNIT"/>
    <property type="match status" value="1"/>
</dbReference>
<dbReference type="PANTHER" id="PTHR11538">
    <property type="entry name" value="PHENYLALANYL-TRNA SYNTHETASE"/>
    <property type="match status" value="1"/>
</dbReference>
<dbReference type="Pfam" id="PF01409">
    <property type="entry name" value="tRNA-synt_2d"/>
    <property type="match status" value="1"/>
</dbReference>
<dbReference type="SUPFAM" id="SSF55681">
    <property type="entry name" value="Class II aaRS and biotin synthetases"/>
    <property type="match status" value="1"/>
</dbReference>
<dbReference type="PROSITE" id="PS50862">
    <property type="entry name" value="AA_TRNA_LIGASE_II"/>
    <property type="match status" value="1"/>
</dbReference>
<accession>Q8ZX61</accession>
<gene>
    <name evidence="1" type="primary">pheS</name>
    <name type="ordered locus">PAE1441</name>
</gene>
<organism>
    <name type="scientific">Pyrobaculum aerophilum (strain ATCC 51768 / DSM 7523 / JCM 9630 / CIP 104966 / NBRC 100827 / IM2)</name>
    <dbReference type="NCBI Taxonomy" id="178306"/>
    <lineage>
        <taxon>Archaea</taxon>
        <taxon>Thermoproteota</taxon>
        <taxon>Thermoprotei</taxon>
        <taxon>Thermoproteales</taxon>
        <taxon>Thermoproteaceae</taxon>
        <taxon>Pyrobaculum</taxon>
    </lineage>
</organism>